<proteinExistence type="inferred from homology"/>
<organism>
    <name type="scientific">Parasynechococcus marenigrum (strain WH8102)</name>
    <dbReference type="NCBI Taxonomy" id="84588"/>
    <lineage>
        <taxon>Bacteria</taxon>
        <taxon>Bacillati</taxon>
        <taxon>Cyanobacteriota</taxon>
        <taxon>Cyanophyceae</taxon>
        <taxon>Synechococcales</taxon>
        <taxon>Prochlorococcaceae</taxon>
        <taxon>Parasynechococcus</taxon>
        <taxon>Parasynechococcus marenigrum</taxon>
    </lineage>
</organism>
<protein>
    <recommendedName>
        <fullName evidence="1">Homoserine kinase</fullName>
        <shortName evidence="1">HK</shortName>
        <shortName evidence="1">HSK</shortName>
        <ecNumber evidence="1">2.7.1.39</ecNumber>
    </recommendedName>
</protein>
<feature type="chain" id="PRO_0000156623" description="Homoserine kinase">
    <location>
        <begin position="1"/>
        <end position="315"/>
    </location>
</feature>
<feature type="binding site" evidence="1">
    <location>
        <begin position="97"/>
        <end position="107"/>
    </location>
    <ligand>
        <name>ATP</name>
        <dbReference type="ChEBI" id="CHEBI:30616"/>
    </ligand>
</feature>
<name>KHSE_PARMW</name>
<accession>Q7U659</accession>
<dbReference type="EC" id="2.7.1.39" evidence="1"/>
<dbReference type="EMBL" id="BX569693">
    <property type="protein sequence ID" value="CAE07996.1"/>
    <property type="molecule type" value="Genomic_DNA"/>
</dbReference>
<dbReference type="RefSeq" id="WP_011128345.1">
    <property type="nucleotide sequence ID" value="NC_005070.1"/>
</dbReference>
<dbReference type="SMR" id="Q7U659"/>
<dbReference type="STRING" id="84588.SYNW1481"/>
<dbReference type="KEGG" id="syw:SYNW1481"/>
<dbReference type="eggNOG" id="COG0083">
    <property type="taxonomic scope" value="Bacteria"/>
</dbReference>
<dbReference type="HOGENOM" id="CLU_041243_0_2_3"/>
<dbReference type="UniPathway" id="UPA00050">
    <property type="reaction ID" value="UER00064"/>
</dbReference>
<dbReference type="Proteomes" id="UP000001422">
    <property type="component" value="Chromosome"/>
</dbReference>
<dbReference type="GO" id="GO:0005737">
    <property type="term" value="C:cytoplasm"/>
    <property type="evidence" value="ECO:0007669"/>
    <property type="project" value="UniProtKB-SubCell"/>
</dbReference>
<dbReference type="GO" id="GO:0005524">
    <property type="term" value="F:ATP binding"/>
    <property type="evidence" value="ECO:0007669"/>
    <property type="project" value="UniProtKB-UniRule"/>
</dbReference>
<dbReference type="GO" id="GO:0004413">
    <property type="term" value="F:homoserine kinase activity"/>
    <property type="evidence" value="ECO:0007669"/>
    <property type="project" value="UniProtKB-UniRule"/>
</dbReference>
<dbReference type="GO" id="GO:0009088">
    <property type="term" value="P:threonine biosynthetic process"/>
    <property type="evidence" value="ECO:0007669"/>
    <property type="project" value="UniProtKB-UniRule"/>
</dbReference>
<dbReference type="Gene3D" id="3.30.230.10">
    <property type="match status" value="1"/>
</dbReference>
<dbReference type="Gene3D" id="3.30.70.890">
    <property type="entry name" value="GHMP kinase, C-terminal domain"/>
    <property type="match status" value="1"/>
</dbReference>
<dbReference type="HAMAP" id="MF_00384">
    <property type="entry name" value="Homoser_kinase"/>
    <property type="match status" value="1"/>
</dbReference>
<dbReference type="InterPro" id="IPR013750">
    <property type="entry name" value="GHMP_kinase_C_dom"/>
</dbReference>
<dbReference type="InterPro" id="IPR036554">
    <property type="entry name" value="GHMP_kinase_C_sf"/>
</dbReference>
<dbReference type="InterPro" id="IPR006204">
    <property type="entry name" value="GHMP_kinase_N_dom"/>
</dbReference>
<dbReference type="InterPro" id="IPR006203">
    <property type="entry name" value="GHMP_knse_ATP-bd_CS"/>
</dbReference>
<dbReference type="InterPro" id="IPR000870">
    <property type="entry name" value="Homoserine_kinase"/>
</dbReference>
<dbReference type="InterPro" id="IPR020568">
    <property type="entry name" value="Ribosomal_Su5_D2-typ_SF"/>
</dbReference>
<dbReference type="InterPro" id="IPR014721">
    <property type="entry name" value="Ribsml_uS5_D2-typ_fold_subgr"/>
</dbReference>
<dbReference type="NCBIfam" id="NF002288">
    <property type="entry name" value="PRK01212.1-4"/>
    <property type="match status" value="1"/>
</dbReference>
<dbReference type="NCBIfam" id="TIGR00191">
    <property type="entry name" value="thrB"/>
    <property type="match status" value="1"/>
</dbReference>
<dbReference type="PANTHER" id="PTHR20861:SF1">
    <property type="entry name" value="HOMOSERINE KINASE"/>
    <property type="match status" value="1"/>
</dbReference>
<dbReference type="PANTHER" id="PTHR20861">
    <property type="entry name" value="HOMOSERINE/4-DIPHOSPHOCYTIDYL-2-C-METHYL-D-ERYTHRITOL KINASE"/>
    <property type="match status" value="1"/>
</dbReference>
<dbReference type="Pfam" id="PF08544">
    <property type="entry name" value="GHMP_kinases_C"/>
    <property type="match status" value="1"/>
</dbReference>
<dbReference type="Pfam" id="PF00288">
    <property type="entry name" value="GHMP_kinases_N"/>
    <property type="match status" value="1"/>
</dbReference>
<dbReference type="PIRSF" id="PIRSF000676">
    <property type="entry name" value="Homoser_kin"/>
    <property type="match status" value="1"/>
</dbReference>
<dbReference type="PRINTS" id="PR00958">
    <property type="entry name" value="HOMSERKINASE"/>
</dbReference>
<dbReference type="SUPFAM" id="SSF55060">
    <property type="entry name" value="GHMP Kinase, C-terminal domain"/>
    <property type="match status" value="1"/>
</dbReference>
<dbReference type="SUPFAM" id="SSF54211">
    <property type="entry name" value="Ribosomal protein S5 domain 2-like"/>
    <property type="match status" value="1"/>
</dbReference>
<dbReference type="PROSITE" id="PS00627">
    <property type="entry name" value="GHMP_KINASES_ATP"/>
    <property type="match status" value="1"/>
</dbReference>
<keyword id="KW-0028">Amino-acid biosynthesis</keyword>
<keyword id="KW-0067">ATP-binding</keyword>
<keyword id="KW-0963">Cytoplasm</keyword>
<keyword id="KW-0418">Kinase</keyword>
<keyword id="KW-0547">Nucleotide-binding</keyword>
<keyword id="KW-0791">Threonine biosynthesis</keyword>
<keyword id="KW-0808">Transferase</keyword>
<evidence type="ECO:0000255" key="1">
    <source>
        <dbReference type="HAMAP-Rule" id="MF_00384"/>
    </source>
</evidence>
<sequence>MSQPRIGQKVVVDVPATTANLGPGFDCLGAALDLNNRFAMRRIEGSGERFELIIEGTYGSHLRGGPDNLVYRAAQRVWKAANMEPVALEARVRLAVPPARGLGSSATAIVAGLMGANALVGEPLSKEKLLELAIDIEGHPDNVVPSLLGGLCMTAKAASQRWRVVRCEWISSVKAVVAIPSIRLSTSEARRAMPKAIPVSDAVVNLGALTLLLQGLRTGNGDLIADGMHDRLHEPYRWRLIKGGDDVKAAALEAGAWGCAISGAGPSIIALCAEDKGQAVSRAMVKAWEAAGVASRAPVLNLQTSGSHWQPADAG</sequence>
<gene>
    <name evidence="1" type="primary">thrB</name>
    <name type="ordered locus">SYNW1481</name>
</gene>
<reference key="1">
    <citation type="journal article" date="2003" name="Nature">
        <title>The genome of a motile marine Synechococcus.</title>
        <authorList>
            <person name="Palenik B."/>
            <person name="Brahamsha B."/>
            <person name="Larimer F.W."/>
            <person name="Land M.L."/>
            <person name="Hauser L."/>
            <person name="Chain P."/>
            <person name="Lamerdin J.E."/>
            <person name="Regala W."/>
            <person name="Allen E.E."/>
            <person name="McCarren J."/>
            <person name="Paulsen I.T."/>
            <person name="Dufresne A."/>
            <person name="Partensky F."/>
            <person name="Webb E.A."/>
            <person name="Waterbury J."/>
        </authorList>
    </citation>
    <scope>NUCLEOTIDE SEQUENCE [LARGE SCALE GENOMIC DNA]</scope>
    <source>
        <strain>WH8102</strain>
    </source>
</reference>
<comment type="function">
    <text evidence="1">Catalyzes the ATP-dependent phosphorylation of L-homoserine to L-homoserine phosphate.</text>
</comment>
<comment type="catalytic activity">
    <reaction evidence="1">
        <text>L-homoserine + ATP = O-phospho-L-homoserine + ADP + H(+)</text>
        <dbReference type="Rhea" id="RHEA:13985"/>
        <dbReference type="ChEBI" id="CHEBI:15378"/>
        <dbReference type="ChEBI" id="CHEBI:30616"/>
        <dbReference type="ChEBI" id="CHEBI:57476"/>
        <dbReference type="ChEBI" id="CHEBI:57590"/>
        <dbReference type="ChEBI" id="CHEBI:456216"/>
        <dbReference type="EC" id="2.7.1.39"/>
    </reaction>
</comment>
<comment type="pathway">
    <text evidence="1">Amino-acid biosynthesis; L-threonine biosynthesis; L-threonine from L-aspartate: step 4/5.</text>
</comment>
<comment type="subcellular location">
    <subcellularLocation>
        <location evidence="1">Cytoplasm</location>
    </subcellularLocation>
</comment>
<comment type="similarity">
    <text evidence="1">Belongs to the GHMP kinase family. Homoserine kinase subfamily.</text>
</comment>